<comment type="function">
    <text evidence="1">Responsible for the transport of dicarboxylates such as succinate, fumarate, and malate from the periplasm across the membrane.</text>
</comment>
<comment type="subcellular location">
    <subcellularLocation>
        <location evidence="1">Cell inner membrane</location>
        <topology evidence="1">Multi-pass membrane protein</topology>
    </subcellularLocation>
</comment>
<comment type="similarity">
    <text evidence="1">Belongs to the dicarboxylate/amino acid:cation symporter (DAACS) (TC 2.A.23) family.</text>
</comment>
<keyword id="KW-0997">Cell inner membrane</keyword>
<keyword id="KW-1003">Cell membrane</keyword>
<keyword id="KW-0472">Membrane</keyword>
<keyword id="KW-1185">Reference proteome</keyword>
<keyword id="KW-0769">Symport</keyword>
<keyword id="KW-0812">Transmembrane</keyword>
<keyword id="KW-1133">Transmembrane helix</keyword>
<keyword id="KW-0813">Transport</keyword>
<sequence>MKTSLFKSLYFQVLTAIAIGILLGHFYPEIGEQMKPLGDGFVKLIKMIIAPVIFCTVVTGIAGMESMKAVGRTGAVALLYFEIVSTIALIIGLIIVNVVQPGAGMNVDPATLDAKAVAVYADQAKDQGIVAFIMDVIPASVIGAFASGNILQVLLFAVLFGFALHRLGSKGQLIFNVIESFSQVIFGIINMIMRLAPIGAFGAMAFTIGKYGVGTLVQLGQLIICFYITCILFVVLVLGSIAKATGFSIFKFIRYIREELLIVLGTSSSESALPRMLDKMEKLGCRKSVVGLVIPTGYSFNLDGTSIYLTMAAVFIAQATNSQMDIVHQITLLIVLLLSSKGAAGVTGSGFIVLAATLSAVGHLPVAGLALILGIDRFMSEARALTNLVGNGVATIVVAKWVKELDHKKLDDVLNNRAPDGKTHELSS</sequence>
<accession>Q3YVR0</accession>
<reference key="1">
    <citation type="journal article" date="2005" name="Nucleic Acids Res.">
        <title>Genome dynamics and diversity of Shigella species, the etiologic agents of bacillary dysentery.</title>
        <authorList>
            <person name="Yang F."/>
            <person name="Yang J."/>
            <person name="Zhang X."/>
            <person name="Chen L."/>
            <person name="Jiang Y."/>
            <person name="Yan Y."/>
            <person name="Tang X."/>
            <person name="Wang J."/>
            <person name="Xiong Z."/>
            <person name="Dong J."/>
            <person name="Xue Y."/>
            <person name="Zhu Y."/>
            <person name="Xu X."/>
            <person name="Sun L."/>
            <person name="Chen S."/>
            <person name="Nie H."/>
            <person name="Peng J."/>
            <person name="Xu J."/>
            <person name="Wang Y."/>
            <person name="Yuan Z."/>
            <person name="Wen Y."/>
            <person name="Yao Z."/>
            <person name="Shen Y."/>
            <person name="Qiang B."/>
            <person name="Hou Y."/>
            <person name="Yu J."/>
            <person name="Jin Q."/>
        </authorList>
    </citation>
    <scope>NUCLEOTIDE SEQUENCE [LARGE SCALE GENOMIC DNA]</scope>
    <source>
        <strain>Ss046</strain>
    </source>
</reference>
<proteinExistence type="inferred from homology"/>
<evidence type="ECO:0000255" key="1">
    <source>
        <dbReference type="HAMAP-Rule" id="MF_01300"/>
    </source>
</evidence>
<protein>
    <recommendedName>
        <fullName evidence="1">C4-dicarboxylate transport protein</fullName>
    </recommendedName>
</protein>
<organism>
    <name type="scientific">Shigella sonnei (strain Ss046)</name>
    <dbReference type="NCBI Taxonomy" id="300269"/>
    <lineage>
        <taxon>Bacteria</taxon>
        <taxon>Pseudomonadati</taxon>
        <taxon>Pseudomonadota</taxon>
        <taxon>Gammaproteobacteria</taxon>
        <taxon>Enterobacterales</taxon>
        <taxon>Enterobacteriaceae</taxon>
        <taxon>Shigella</taxon>
    </lineage>
</organism>
<gene>
    <name evidence="1" type="primary">dctA</name>
    <name type="ordered locus">SSON_3863</name>
</gene>
<dbReference type="EMBL" id="CP000038">
    <property type="protein sequence ID" value="AAZ90402.1"/>
    <property type="molecule type" value="Genomic_DNA"/>
</dbReference>
<dbReference type="RefSeq" id="WP_000858214.1">
    <property type="nucleotide sequence ID" value="NC_007384.1"/>
</dbReference>
<dbReference type="SMR" id="Q3YVR0"/>
<dbReference type="GeneID" id="93778248"/>
<dbReference type="KEGG" id="ssn:SSON_3863"/>
<dbReference type="HOGENOM" id="CLU_019375_7_0_6"/>
<dbReference type="Proteomes" id="UP000002529">
    <property type="component" value="Chromosome"/>
</dbReference>
<dbReference type="GO" id="GO:0005886">
    <property type="term" value="C:plasma membrane"/>
    <property type="evidence" value="ECO:0007669"/>
    <property type="project" value="UniProtKB-SubCell"/>
</dbReference>
<dbReference type="GO" id="GO:0015138">
    <property type="term" value="F:fumarate transmembrane transporter activity"/>
    <property type="evidence" value="ECO:0007669"/>
    <property type="project" value="TreeGrafter"/>
</dbReference>
<dbReference type="GO" id="GO:0015366">
    <property type="term" value="F:malate:proton symporter activity"/>
    <property type="evidence" value="ECO:0007669"/>
    <property type="project" value="TreeGrafter"/>
</dbReference>
<dbReference type="GO" id="GO:0015141">
    <property type="term" value="F:succinate transmembrane transporter activity"/>
    <property type="evidence" value="ECO:0007669"/>
    <property type="project" value="TreeGrafter"/>
</dbReference>
<dbReference type="GO" id="GO:0070778">
    <property type="term" value="P:L-aspartate transmembrane transport"/>
    <property type="evidence" value="ECO:0007669"/>
    <property type="project" value="TreeGrafter"/>
</dbReference>
<dbReference type="FunFam" id="1.10.3860.10:FF:000001">
    <property type="entry name" value="C4-dicarboxylate transport protein"/>
    <property type="match status" value="1"/>
</dbReference>
<dbReference type="Gene3D" id="1.10.3860.10">
    <property type="entry name" value="Sodium:dicarboxylate symporter"/>
    <property type="match status" value="1"/>
</dbReference>
<dbReference type="HAMAP" id="MF_01300">
    <property type="entry name" value="C4_dicarb_transport"/>
    <property type="match status" value="1"/>
</dbReference>
<dbReference type="InterPro" id="IPR023954">
    <property type="entry name" value="C4_dicarb_transport"/>
</dbReference>
<dbReference type="InterPro" id="IPR001991">
    <property type="entry name" value="Na-dicarboxylate_symporter"/>
</dbReference>
<dbReference type="InterPro" id="IPR018107">
    <property type="entry name" value="Na-dicarboxylate_symporter_CS"/>
</dbReference>
<dbReference type="InterPro" id="IPR036458">
    <property type="entry name" value="Na:dicarbo_symporter_sf"/>
</dbReference>
<dbReference type="NCBIfam" id="NF002461">
    <property type="entry name" value="PRK01663.1"/>
    <property type="match status" value="1"/>
</dbReference>
<dbReference type="NCBIfam" id="NF009587">
    <property type="entry name" value="PRK13027.1"/>
    <property type="match status" value="1"/>
</dbReference>
<dbReference type="PANTHER" id="PTHR42865:SF1">
    <property type="entry name" value="AEROBIC C4-DICARBOXYLATE TRANSPORT PROTEIN"/>
    <property type="match status" value="1"/>
</dbReference>
<dbReference type="PANTHER" id="PTHR42865">
    <property type="entry name" value="PROTON/GLUTAMATE-ASPARTATE SYMPORTER"/>
    <property type="match status" value="1"/>
</dbReference>
<dbReference type="Pfam" id="PF00375">
    <property type="entry name" value="SDF"/>
    <property type="match status" value="1"/>
</dbReference>
<dbReference type="PRINTS" id="PR00173">
    <property type="entry name" value="EDTRNSPORT"/>
</dbReference>
<dbReference type="SUPFAM" id="SSF118215">
    <property type="entry name" value="Proton glutamate symport protein"/>
    <property type="match status" value="1"/>
</dbReference>
<dbReference type="PROSITE" id="PS00713">
    <property type="entry name" value="NA_DICARBOXYL_SYMP_1"/>
    <property type="match status" value="1"/>
</dbReference>
<dbReference type="PROSITE" id="PS00714">
    <property type="entry name" value="NA_DICARBOXYL_SYMP_2"/>
    <property type="match status" value="1"/>
</dbReference>
<feature type="chain" id="PRO_1000067469" description="C4-dicarboxylate transport protein">
    <location>
        <begin position="1"/>
        <end position="428"/>
    </location>
</feature>
<feature type="transmembrane region" description="Helical" evidence="1">
    <location>
        <begin position="8"/>
        <end position="28"/>
    </location>
</feature>
<feature type="transmembrane region" description="Helical" evidence="1">
    <location>
        <begin position="44"/>
        <end position="64"/>
    </location>
</feature>
<feature type="transmembrane region" description="Helical" evidence="1">
    <location>
        <begin position="76"/>
        <end position="96"/>
    </location>
</feature>
<feature type="transmembrane region" description="Helical" evidence="1">
    <location>
        <begin position="142"/>
        <end position="162"/>
    </location>
</feature>
<feature type="transmembrane region" description="Helical" evidence="1">
    <location>
        <begin position="184"/>
        <end position="204"/>
    </location>
</feature>
<feature type="transmembrane region" description="Helical" evidence="1">
    <location>
        <begin position="222"/>
        <end position="242"/>
    </location>
</feature>
<feature type="transmembrane region" description="Helical" evidence="1">
    <location>
        <begin position="326"/>
        <end position="346"/>
    </location>
</feature>
<feature type="transmembrane region" description="Helical" evidence="1">
    <location>
        <begin position="352"/>
        <end position="372"/>
    </location>
</feature>
<name>DCTA_SHISS</name>